<sequence length="655" mass="72031">MFKKLHMKIAVFVSIMLIITVVLLMLSSYLTLKPMITEDGKNTTQNVTQSLEQNIELQLKSYAISLSRLANGELTHTFVTKPSKEASRLFHDDIKQIKDNDDYVAMAYIGTAKKEMFTYPKADFAEDYDPTSRPWYKLAAETPDQVVWTEPYKDVVTGDMIVTASKAILDRQKVIGVASYDLKLSAIQSMVNKQKVPYKGFAFLADASGNLLAHPSNQGKNISKDQTLQTIASEKKGIQDVNGKMVVYQTIGETGWKVGTQFDTDQLMWISDKMNRANLWISLIALIITIILSYFLAKTITGPIQQLIVKTKAVSAGDLTVRAESKSKDEVGILTRDFNLMVENMKEMVEQVRLSSGKVSDTSEQLTAVAAETNETSGQIAKAIEEVAAGASEQASEVETINEKSESLSTKIRQIAEEAGGIKERSKSSEDASYKGLDALGQLLMKSNEANMETKKVETMLLDLENQTKNIEEVVTAISNISDQTNLLALNASIEAARAGESGRGFAVVADEVRKLAEQSALSTKHISETVKLIQLETKEASHAMVEASRMNDEQNSAIHETGEVLNTITAEMQSLVQGIDHIYAEIQRMSEEQLAISEAIQSISAISQESAAAAEEVNASTDEQLVTLDKVKHSTETLKHASQELMNTIAKFTL</sequence>
<feature type="chain" id="PRO_0000110558" description="Methyl-accepting chemotaxis protein McpC">
    <location>
        <begin position="1"/>
        <end position="655"/>
    </location>
</feature>
<feature type="topological domain" description="Cytoplasmic" evidence="1">
    <location>
        <begin position="1"/>
        <end position="8"/>
    </location>
</feature>
<feature type="transmembrane region" description="Helical" evidence="1">
    <location>
        <begin position="9"/>
        <end position="29"/>
    </location>
</feature>
<feature type="topological domain" description="Extracellular" evidence="1">
    <location>
        <begin position="30"/>
        <end position="276"/>
    </location>
</feature>
<feature type="transmembrane region" description="Helical" evidence="1">
    <location>
        <begin position="277"/>
        <end position="297"/>
    </location>
</feature>
<feature type="topological domain" description="Cytoplasmic" evidence="1">
    <location>
        <begin position="298"/>
        <end position="655"/>
    </location>
</feature>
<feature type="domain" description="Cache">
    <location>
        <begin position="148"/>
        <end position="225"/>
    </location>
</feature>
<feature type="domain" description="HAMP" evidence="2">
    <location>
        <begin position="298"/>
        <end position="350"/>
    </location>
</feature>
<feature type="domain" description="Methyl-accepting transducer" evidence="3">
    <location>
        <begin position="369"/>
        <end position="619"/>
    </location>
</feature>
<feature type="sequence conflict" description="In Ref. 1; CAA66052." evidence="8" ref="1">
    <original>KQ</original>
    <variation>NE</variation>
    <location>
        <begin position="95"/>
        <end position="96"/>
    </location>
</feature>
<feature type="sequence conflict" description="In Ref. 1; CAA66052." evidence="8" ref="1">
    <original>EMFTYP</original>
    <variation>RNVYIS</variation>
    <location>
        <begin position="115"/>
        <end position="120"/>
    </location>
</feature>
<feature type="sequence conflict" description="In Ref. 1; CAA66052." evidence="8" ref="1">
    <original>AEDYDPTSRPW</original>
    <variation>LRITIQHQDM</variation>
    <location>
        <begin position="125"/>
        <end position="135"/>
    </location>
</feature>
<feature type="sequence conflict" description="In Ref. 1; CAA66052." evidence="8" ref="1">
    <original>M</original>
    <variation>L</variation>
    <location>
        <position position="190"/>
    </location>
</feature>
<feature type="sequence conflict" description="In Ref. 1; CAA66052." evidence="8" ref="1">
    <original>T</original>
    <variation>R</variation>
    <location>
        <position position="376"/>
    </location>
</feature>
<feature type="sequence conflict" description="In Ref. 1; CAA66052." evidence="8" ref="1">
    <original>D</original>
    <variation>H</variation>
    <location>
        <position position="438"/>
    </location>
</feature>
<feature type="sequence conflict" description="In Ref. 1; CAA66052." evidence="8" ref="1">
    <original>V</original>
    <variation>E</variation>
    <location>
        <position position="457"/>
    </location>
</feature>
<feature type="sequence conflict" description="In Ref. 1; CAA66052." evidence="8" ref="1">
    <original>A</original>
    <variation>R</variation>
    <location>
        <position position="492"/>
    </location>
</feature>
<feature type="sequence conflict" description="In Ref. 1; CAA66052." evidence="8" ref="1">
    <original>ELM</original>
    <variation>DVI</variation>
    <location>
        <begin position="645"/>
        <end position="647"/>
    </location>
</feature>
<feature type="sequence conflict" description="In Ref. 1; CAA66052." evidence="8" ref="1">
    <original>A</original>
    <variation>R</variation>
    <location>
        <position position="651"/>
    </location>
</feature>
<proteinExistence type="evidence at protein level"/>
<protein>
    <recommendedName>
        <fullName>Methyl-accepting chemotaxis protein McpC</fullName>
    </recommendedName>
</protein>
<gene>
    <name type="primary">mcpC</name>
    <name type="synonym">prg71</name>
    <name type="ordered locus">BSU13950</name>
</gene>
<reference key="1">
    <citation type="journal article" date="1997" name="Microbiology">
        <title>Functional and genetic characterization of mcpC, which encodes a third methyl-accepting chemotaxis protein in Bacillus subtilis.</title>
        <authorList>
            <person name="Mueller J."/>
            <person name="Schiel S."/>
            <person name="Ordal G.W."/>
            <person name="Saxild H.H."/>
        </authorList>
    </citation>
    <scope>NUCLEOTIDE SEQUENCE [GENOMIC DNA]</scope>
    <scope>FUNCTION</scope>
    <scope>METHYLATION</scope>
    <scope>EXPRESSION</scope>
    <scope>INDUCTION</scope>
    <source>
        <strain>168</strain>
    </source>
</reference>
<reference key="2">
    <citation type="journal article" date="1997" name="Nature">
        <title>The complete genome sequence of the Gram-positive bacterium Bacillus subtilis.</title>
        <authorList>
            <person name="Kunst F."/>
            <person name="Ogasawara N."/>
            <person name="Moszer I."/>
            <person name="Albertini A.M."/>
            <person name="Alloni G."/>
            <person name="Azevedo V."/>
            <person name="Bertero M.G."/>
            <person name="Bessieres P."/>
            <person name="Bolotin A."/>
            <person name="Borchert S."/>
            <person name="Borriss R."/>
            <person name="Boursier L."/>
            <person name="Brans A."/>
            <person name="Braun M."/>
            <person name="Brignell S.C."/>
            <person name="Bron S."/>
            <person name="Brouillet S."/>
            <person name="Bruschi C.V."/>
            <person name="Caldwell B."/>
            <person name="Capuano V."/>
            <person name="Carter N.M."/>
            <person name="Choi S.-K."/>
            <person name="Codani J.-J."/>
            <person name="Connerton I.F."/>
            <person name="Cummings N.J."/>
            <person name="Daniel R.A."/>
            <person name="Denizot F."/>
            <person name="Devine K.M."/>
            <person name="Duesterhoeft A."/>
            <person name="Ehrlich S.D."/>
            <person name="Emmerson P.T."/>
            <person name="Entian K.-D."/>
            <person name="Errington J."/>
            <person name="Fabret C."/>
            <person name="Ferrari E."/>
            <person name="Foulger D."/>
            <person name="Fritz C."/>
            <person name="Fujita M."/>
            <person name="Fujita Y."/>
            <person name="Fuma S."/>
            <person name="Galizzi A."/>
            <person name="Galleron N."/>
            <person name="Ghim S.-Y."/>
            <person name="Glaser P."/>
            <person name="Goffeau A."/>
            <person name="Golightly E.J."/>
            <person name="Grandi G."/>
            <person name="Guiseppi G."/>
            <person name="Guy B.J."/>
            <person name="Haga K."/>
            <person name="Haiech J."/>
            <person name="Harwood C.R."/>
            <person name="Henaut A."/>
            <person name="Hilbert H."/>
            <person name="Holsappel S."/>
            <person name="Hosono S."/>
            <person name="Hullo M.-F."/>
            <person name="Itaya M."/>
            <person name="Jones L.-M."/>
            <person name="Joris B."/>
            <person name="Karamata D."/>
            <person name="Kasahara Y."/>
            <person name="Klaerr-Blanchard M."/>
            <person name="Klein C."/>
            <person name="Kobayashi Y."/>
            <person name="Koetter P."/>
            <person name="Koningstein G."/>
            <person name="Krogh S."/>
            <person name="Kumano M."/>
            <person name="Kurita K."/>
            <person name="Lapidus A."/>
            <person name="Lardinois S."/>
            <person name="Lauber J."/>
            <person name="Lazarevic V."/>
            <person name="Lee S.-M."/>
            <person name="Levine A."/>
            <person name="Liu H."/>
            <person name="Masuda S."/>
            <person name="Mauel C."/>
            <person name="Medigue C."/>
            <person name="Medina N."/>
            <person name="Mellado R.P."/>
            <person name="Mizuno M."/>
            <person name="Moestl D."/>
            <person name="Nakai S."/>
            <person name="Noback M."/>
            <person name="Noone D."/>
            <person name="O'Reilly M."/>
            <person name="Ogawa K."/>
            <person name="Ogiwara A."/>
            <person name="Oudega B."/>
            <person name="Park S.-H."/>
            <person name="Parro V."/>
            <person name="Pohl T.M."/>
            <person name="Portetelle D."/>
            <person name="Porwollik S."/>
            <person name="Prescott A.M."/>
            <person name="Presecan E."/>
            <person name="Pujic P."/>
            <person name="Purnelle B."/>
            <person name="Rapoport G."/>
            <person name="Rey M."/>
            <person name="Reynolds S."/>
            <person name="Rieger M."/>
            <person name="Rivolta C."/>
            <person name="Rocha E."/>
            <person name="Roche B."/>
            <person name="Rose M."/>
            <person name="Sadaie Y."/>
            <person name="Sato T."/>
            <person name="Scanlan E."/>
            <person name="Schleich S."/>
            <person name="Schroeter R."/>
            <person name="Scoffone F."/>
            <person name="Sekiguchi J."/>
            <person name="Sekowska A."/>
            <person name="Seror S.J."/>
            <person name="Serror P."/>
            <person name="Shin B.-S."/>
            <person name="Soldo B."/>
            <person name="Sorokin A."/>
            <person name="Tacconi E."/>
            <person name="Takagi T."/>
            <person name="Takahashi H."/>
            <person name="Takemaru K."/>
            <person name="Takeuchi M."/>
            <person name="Tamakoshi A."/>
            <person name="Tanaka T."/>
            <person name="Terpstra P."/>
            <person name="Tognoni A."/>
            <person name="Tosato V."/>
            <person name="Uchiyama S."/>
            <person name="Vandenbol M."/>
            <person name="Vannier F."/>
            <person name="Vassarotti A."/>
            <person name="Viari A."/>
            <person name="Wambutt R."/>
            <person name="Wedler E."/>
            <person name="Wedler H."/>
            <person name="Weitzenegger T."/>
            <person name="Winters P."/>
            <person name="Wipat A."/>
            <person name="Yamamoto H."/>
            <person name="Yamane K."/>
            <person name="Yasumoto K."/>
            <person name="Yata K."/>
            <person name="Yoshida K."/>
            <person name="Yoshikawa H.-F."/>
            <person name="Zumstein E."/>
            <person name="Yoshikawa H."/>
            <person name="Danchin A."/>
        </authorList>
    </citation>
    <scope>NUCLEOTIDE SEQUENCE [LARGE SCALE GENOMIC DNA]</scope>
    <source>
        <strain>168</strain>
    </source>
</reference>
<reference key="3">
    <citation type="journal article" date="2009" name="Microbiology">
        <title>From a consortium sequence to a unified sequence: the Bacillus subtilis 168 reference genome a decade later.</title>
        <authorList>
            <person name="Barbe V."/>
            <person name="Cruveiller S."/>
            <person name="Kunst F."/>
            <person name="Lenoble P."/>
            <person name="Meurice G."/>
            <person name="Sekowska A."/>
            <person name="Vallenet D."/>
            <person name="Wang T."/>
            <person name="Moszer I."/>
            <person name="Medigue C."/>
            <person name="Danchin A."/>
        </authorList>
    </citation>
    <scope>SEQUENCE REVISION</scope>
</reference>
<reference key="4">
    <citation type="journal article" date="1998" name="J. Bacteriol.">
        <title>Unique regulation of carbohydrate chemotaxis in Bacillus subtilis by the phosphoenolpyruvate-dependent phosphotransferase system and the methyl-accepting chemotaxis protein McpC.</title>
        <authorList>
            <person name="Garrity L.F."/>
            <person name="Schiel S.L."/>
            <person name="Merrill R."/>
            <person name="Reizer J."/>
            <person name="Saier M.H. Jr."/>
            <person name="Ordal G.W."/>
        </authorList>
    </citation>
    <scope>FUNCTION IN RESPONSE TO PTS SUBSTRATES</scope>
</reference>
<reference key="5">
    <citation type="journal article" date="2002" name="J. Biol. Chem.">
        <title>Bacillus subtilis CheD is a chemoreceptor modification enzyme required for chemotaxis.</title>
        <authorList>
            <person name="Kristich C.J."/>
            <person name="Ordal G.W."/>
        </authorList>
    </citation>
    <scope>DEAMIDATION BY CHED</scope>
</reference>
<reference key="6">
    <citation type="journal article" date="2013" name="Mol. Microbiol.">
        <title>Flotillins functionally organize the bacterial membrane.</title>
        <authorList>
            <person name="Bach J.N."/>
            <person name="Bramkamp M."/>
        </authorList>
    </citation>
    <scope>INTERACTION WITH FLOT</scope>
    <scope>SUBCELLULAR LOCATION</scope>
    <source>
        <strain>168</strain>
    </source>
</reference>
<evidence type="ECO:0000255" key="1"/>
<evidence type="ECO:0000255" key="2">
    <source>
        <dbReference type="PROSITE-ProRule" id="PRU00102"/>
    </source>
</evidence>
<evidence type="ECO:0000255" key="3">
    <source>
        <dbReference type="PROSITE-ProRule" id="PRU00284"/>
    </source>
</evidence>
<evidence type="ECO:0000269" key="4">
    <source>
    </source>
</evidence>
<evidence type="ECO:0000269" key="5">
    <source>
    </source>
</evidence>
<evidence type="ECO:0000269" key="6">
    <source>
    </source>
</evidence>
<evidence type="ECO:0000269" key="7">
    <source>
    </source>
</evidence>
<evidence type="ECO:0000305" key="8"/>
<accession>P54576</accession>
<dbReference type="EMBL" id="X97385">
    <property type="protein sequence ID" value="CAA66052.1"/>
    <property type="molecule type" value="Genomic_DNA"/>
</dbReference>
<dbReference type="EMBL" id="AL009126">
    <property type="protein sequence ID" value="CAB13268.2"/>
    <property type="molecule type" value="Genomic_DNA"/>
</dbReference>
<dbReference type="PIR" id="A69656">
    <property type="entry name" value="A69656"/>
</dbReference>
<dbReference type="RefSeq" id="NP_389278.2">
    <property type="nucleotide sequence ID" value="NC_000964.3"/>
</dbReference>
<dbReference type="RefSeq" id="WP_003245443.1">
    <property type="nucleotide sequence ID" value="NZ_OZ025638.1"/>
</dbReference>
<dbReference type="SMR" id="P54576"/>
<dbReference type="FunCoup" id="P54576">
    <property type="interactions" value="197"/>
</dbReference>
<dbReference type="STRING" id="224308.BSU13950"/>
<dbReference type="jPOST" id="P54576"/>
<dbReference type="PaxDb" id="224308-BSU13950"/>
<dbReference type="EnsemblBacteria" id="CAB13268">
    <property type="protein sequence ID" value="CAB13268"/>
    <property type="gene ID" value="BSU_13950"/>
</dbReference>
<dbReference type="GeneID" id="936206"/>
<dbReference type="KEGG" id="bsu:BSU13950"/>
<dbReference type="PATRIC" id="fig|224308.179.peg.1521"/>
<dbReference type="eggNOG" id="COG0840">
    <property type="taxonomic scope" value="Bacteria"/>
</dbReference>
<dbReference type="InParanoid" id="P54576"/>
<dbReference type="OrthoDB" id="9760371at2"/>
<dbReference type="PhylomeDB" id="P54576"/>
<dbReference type="BioCyc" id="BSUB:BSU13950-MONOMER"/>
<dbReference type="Proteomes" id="UP000001570">
    <property type="component" value="Chromosome"/>
</dbReference>
<dbReference type="GO" id="GO:0045121">
    <property type="term" value="C:membrane raft"/>
    <property type="evidence" value="ECO:0007669"/>
    <property type="project" value="UniProtKB-SubCell"/>
</dbReference>
<dbReference type="GO" id="GO:0005886">
    <property type="term" value="C:plasma membrane"/>
    <property type="evidence" value="ECO:0007669"/>
    <property type="project" value="UniProtKB-SubCell"/>
</dbReference>
<dbReference type="GO" id="GO:0006935">
    <property type="term" value="P:chemotaxis"/>
    <property type="evidence" value="ECO:0000318"/>
    <property type="project" value="GO_Central"/>
</dbReference>
<dbReference type="GO" id="GO:0050918">
    <property type="term" value="P:positive chemotaxis"/>
    <property type="evidence" value="ECO:0000314"/>
    <property type="project" value="CACAO"/>
</dbReference>
<dbReference type="GO" id="GO:0007165">
    <property type="term" value="P:signal transduction"/>
    <property type="evidence" value="ECO:0007669"/>
    <property type="project" value="UniProtKB-KW"/>
</dbReference>
<dbReference type="CDD" id="cd06225">
    <property type="entry name" value="HAMP"/>
    <property type="match status" value="1"/>
</dbReference>
<dbReference type="CDD" id="cd11386">
    <property type="entry name" value="MCP_signal"/>
    <property type="match status" value="1"/>
</dbReference>
<dbReference type="CDD" id="cd12913">
    <property type="entry name" value="PDC1_MCP_like"/>
    <property type="match status" value="1"/>
</dbReference>
<dbReference type="CDD" id="cd12912">
    <property type="entry name" value="PDC2_MCP_like"/>
    <property type="match status" value="1"/>
</dbReference>
<dbReference type="Gene3D" id="1.10.8.500">
    <property type="entry name" value="HAMP domain in histidine kinase"/>
    <property type="match status" value="1"/>
</dbReference>
<dbReference type="Gene3D" id="1.10.287.950">
    <property type="entry name" value="Methyl-accepting chemotaxis protein"/>
    <property type="match status" value="1"/>
</dbReference>
<dbReference type="Gene3D" id="3.30.450.20">
    <property type="entry name" value="PAS domain"/>
    <property type="match status" value="1"/>
</dbReference>
<dbReference type="InterPro" id="IPR033479">
    <property type="entry name" value="dCache_1"/>
</dbReference>
<dbReference type="InterPro" id="IPR003660">
    <property type="entry name" value="HAMP_dom"/>
</dbReference>
<dbReference type="InterPro" id="IPR004089">
    <property type="entry name" value="MCPsignal_dom"/>
</dbReference>
<dbReference type="InterPro" id="IPR029151">
    <property type="entry name" value="Sensor-like_sf"/>
</dbReference>
<dbReference type="PANTHER" id="PTHR32089">
    <property type="entry name" value="METHYL-ACCEPTING CHEMOTAXIS PROTEIN MCPB"/>
    <property type="match status" value="1"/>
</dbReference>
<dbReference type="PANTHER" id="PTHR32089:SF114">
    <property type="entry name" value="METHYL-ACCEPTING CHEMOTAXIS PROTEIN MCPB"/>
    <property type="match status" value="1"/>
</dbReference>
<dbReference type="Pfam" id="PF02743">
    <property type="entry name" value="dCache_1"/>
    <property type="match status" value="1"/>
</dbReference>
<dbReference type="Pfam" id="PF00672">
    <property type="entry name" value="HAMP"/>
    <property type="match status" value="1"/>
</dbReference>
<dbReference type="Pfam" id="PF00015">
    <property type="entry name" value="MCPsignal"/>
    <property type="match status" value="1"/>
</dbReference>
<dbReference type="SMART" id="SM00304">
    <property type="entry name" value="HAMP"/>
    <property type="match status" value="1"/>
</dbReference>
<dbReference type="SMART" id="SM00283">
    <property type="entry name" value="MA"/>
    <property type="match status" value="1"/>
</dbReference>
<dbReference type="SUPFAM" id="SSF58104">
    <property type="entry name" value="Methyl-accepting chemotaxis protein (MCP) signaling domain"/>
    <property type="match status" value="1"/>
</dbReference>
<dbReference type="SUPFAM" id="SSF103190">
    <property type="entry name" value="Sensory domain-like"/>
    <property type="match status" value="1"/>
</dbReference>
<dbReference type="PROSITE" id="PS50111">
    <property type="entry name" value="CHEMOTAXIS_TRANSDUC_2"/>
    <property type="match status" value="1"/>
</dbReference>
<dbReference type="PROSITE" id="PS50885">
    <property type="entry name" value="HAMP"/>
    <property type="match status" value="1"/>
</dbReference>
<comment type="function">
    <text evidence="6 7">Chemotactic-signal transducers respond to changes in the concentration of attractants and repellents in the environment, transduce a signal from the outside to the inside of the cell, and facilitate sensory adaptation through the variation of the level of methylation. All amino acids serve as attractants in B.subtilis, they appear to cause an increase in the turnover methyl groups, leading to methylation of an unidentified acceptor, while repellents have been shown to cause a decrease in methyl group turnover. The methyl groups are added by a methyltransferase and removed by a methylesterase. McpC is required for taxis to cysteine, proline, threonine, glycine, serine, lysine, valine and arginine and for aspartate, glutamine, histidine and glutamate. Primarily mediates response to positive stimulus of PTS carbohydrates. Greatly influences the duration or magnitude of the response to negative PTS carbohydrate stimulus.</text>
</comment>
<comment type="subunit">
    <text evidence="5">Interacts with FloT.</text>
</comment>
<comment type="subcellular location">
    <subcellularLocation>
        <location evidence="5">Cell membrane</location>
        <topology evidence="1">Multi-pass membrane protein</topology>
    </subcellularLocation>
    <subcellularLocation>
        <location evidence="5">Membrane raft</location>
        <topology evidence="1">Multi-pass membrane protein</topology>
    </subcellularLocation>
    <text evidence="5">Present in detergent-resistant membrane (DRM) fractions that may be equivalent to eukaryotic membrane rafts; these rafts include proteins involved in signaling, molecule trafficking and protein secretion.</text>
</comment>
<comment type="induction">
    <text evidence="6">Induced by SigD. Expression increases in the late-exponential growth-phase and is maximal during the early-stationary phase.</text>
</comment>
<comment type="PTM">
    <text evidence="4 6">Some glutamine residues are deamidated to glutamate by CheD and subsequently methylated.</text>
</comment>
<comment type="similarity">
    <text evidence="8">Belongs to the methyl-accepting chemotaxis (MCP) protein family.</text>
</comment>
<keyword id="KW-1003">Cell membrane</keyword>
<keyword id="KW-0145">Chemotaxis</keyword>
<keyword id="KW-0472">Membrane</keyword>
<keyword id="KW-0488">Methylation</keyword>
<keyword id="KW-1185">Reference proteome</keyword>
<keyword id="KW-0807">Transducer</keyword>
<keyword id="KW-0812">Transmembrane</keyword>
<keyword id="KW-1133">Transmembrane helix</keyword>
<organism>
    <name type="scientific">Bacillus subtilis (strain 168)</name>
    <dbReference type="NCBI Taxonomy" id="224308"/>
    <lineage>
        <taxon>Bacteria</taxon>
        <taxon>Bacillati</taxon>
        <taxon>Bacillota</taxon>
        <taxon>Bacilli</taxon>
        <taxon>Bacillales</taxon>
        <taxon>Bacillaceae</taxon>
        <taxon>Bacillus</taxon>
    </lineage>
</organism>
<name>MCPC_BACSU</name>